<reference key="1">
    <citation type="journal article" date="2010" name="Appl. Environ. Microbiol.">
        <title>The genome sequence of Psychrobacter arcticus 273-4, a psychroactive Siberian permafrost bacterium, reveals mechanisms for adaptation to low-temperature growth.</title>
        <authorList>
            <person name="Ayala-del-Rio H.L."/>
            <person name="Chain P.S."/>
            <person name="Grzymski J.J."/>
            <person name="Ponder M.A."/>
            <person name="Ivanova N."/>
            <person name="Bergholz P.W."/>
            <person name="Di Bartolo G."/>
            <person name="Hauser L."/>
            <person name="Land M."/>
            <person name="Bakermans C."/>
            <person name="Rodrigues D."/>
            <person name="Klappenbach J."/>
            <person name="Zarka D."/>
            <person name="Larimer F."/>
            <person name="Richardson P."/>
            <person name="Murray A."/>
            <person name="Thomashow M."/>
            <person name="Tiedje J.M."/>
        </authorList>
    </citation>
    <scope>NUCLEOTIDE SEQUENCE [LARGE SCALE GENOMIC DNA]</scope>
    <source>
        <strain>DSM 17307 / VKM B-2377 / 273-4</strain>
    </source>
</reference>
<proteinExistence type="inferred from homology"/>
<evidence type="ECO:0000255" key="1">
    <source>
        <dbReference type="HAMAP-Rule" id="MF_01270"/>
    </source>
</evidence>
<evidence type="ECO:0000305" key="2"/>
<comment type="function">
    <text evidence="1">Catalyzes the specific phosphorylation of 1,6-anhydro-N-acetylmuramic acid (anhMurNAc) with the simultaneous cleavage of the 1,6-anhydro ring, generating MurNAc-6-P. Is required for the utilization of anhMurNAc either imported from the medium or derived from its own cell wall murein, and thus plays a role in cell wall recycling.</text>
</comment>
<comment type="catalytic activity">
    <reaction evidence="1">
        <text>1,6-anhydro-N-acetyl-beta-muramate + ATP + H2O = N-acetyl-D-muramate 6-phosphate + ADP + H(+)</text>
        <dbReference type="Rhea" id="RHEA:24952"/>
        <dbReference type="ChEBI" id="CHEBI:15377"/>
        <dbReference type="ChEBI" id="CHEBI:15378"/>
        <dbReference type="ChEBI" id="CHEBI:30616"/>
        <dbReference type="ChEBI" id="CHEBI:58690"/>
        <dbReference type="ChEBI" id="CHEBI:58722"/>
        <dbReference type="ChEBI" id="CHEBI:456216"/>
        <dbReference type="EC" id="2.7.1.170"/>
    </reaction>
</comment>
<comment type="pathway">
    <text evidence="1">Amino-sugar metabolism; 1,6-anhydro-N-acetylmuramate degradation.</text>
</comment>
<comment type="pathway">
    <text evidence="1">Cell wall biogenesis; peptidoglycan recycling.</text>
</comment>
<comment type="similarity">
    <text evidence="1">Belongs to the anhydro-N-acetylmuramic acid kinase family.</text>
</comment>
<comment type="sequence caution" evidence="2">
    <conflict type="erroneous initiation">
        <sequence resource="EMBL-CDS" id="AAZ19818"/>
    </conflict>
</comment>
<accession>Q4FQ90</accession>
<keyword id="KW-0067">ATP-binding</keyword>
<keyword id="KW-0119">Carbohydrate metabolism</keyword>
<keyword id="KW-0418">Kinase</keyword>
<keyword id="KW-0547">Nucleotide-binding</keyword>
<keyword id="KW-1185">Reference proteome</keyword>
<keyword id="KW-0808">Transferase</keyword>
<feature type="chain" id="PRO_0000250035" description="Anhydro-N-acetylmuramic acid kinase">
    <location>
        <begin position="1"/>
        <end position="436"/>
    </location>
</feature>
<feature type="binding site" evidence="1">
    <location>
        <begin position="32"/>
        <end position="39"/>
    </location>
    <ligand>
        <name>ATP</name>
        <dbReference type="ChEBI" id="CHEBI:30616"/>
    </ligand>
</feature>
<dbReference type="EC" id="2.7.1.170" evidence="1"/>
<dbReference type="EMBL" id="CP000082">
    <property type="protein sequence ID" value="AAZ19818.1"/>
    <property type="status" value="ALT_INIT"/>
    <property type="molecule type" value="Genomic_DNA"/>
</dbReference>
<dbReference type="RefSeq" id="WP_011281227.1">
    <property type="nucleotide sequence ID" value="NC_007204.1"/>
</dbReference>
<dbReference type="SMR" id="Q4FQ90"/>
<dbReference type="STRING" id="259536.Psyc_1971"/>
<dbReference type="KEGG" id="par:Psyc_1971"/>
<dbReference type="eggNOG" id="COG2377">
    <property type="taxonomic scope" value="Bacteria"/>
</dbReference>
<dbReference type="HOGENOM" id="CLU_038782_0_0_6"/>
<dbReference type="OrthoDB" id="9763949at2"/>
<dbReference type="UniPathway" id="UPA00343"/>
<dbReference type="UniPathway" id="UPA00544"/>
<dbReference type="Proteomes" id="UP000000546">
    <property type="component" value="Chromosome"/>
</dbReference>
<dbReference type="GO" id="GO:0005524">
    <property type="term" value="F:ATP binding"/>
    <property type="evidence" value="ECO:0007669"/>
    <property type="project" value="UniProtKB-UniRule"/>
</dbReference>
<dbReference type="GO" id="GO:0016301">
    <property type="term" value="F:kinase activity"/>
    <property type="evidence" value="ECO:0007669"/>
    <property type="project" value="UniProtKB-KW"/>
</dbReference>
<dbReference type="GO" id="GO:0016773">
    <property type="term" value="F:phosphotransferase activity, alcohol group as acceptor"/>
    <property type="evidence" value="ECO:0007669"/>
    <property type="project" value="UniProtKB-UniRule"/>
</dbReference>
<dbReference type="GO" id="GO:0097175">
    <property type="term" value="P:1,6-anhydro-N-acetyl-beta-muramic acid catabolic process"/>
    <property type="evidence" value="ECO:0007669"/>
    <property type="project" value="UniProtKB-UniRule"/>
</dbReference>
<dbReference type="GO" id="GO:0006040">
    <property type="term" value="P:amino sugar metabolic process"/>
    <property type="evidence" value="ECO:0007669"/>
    <property type="project" value="InterPro"/>
</dbReference>
<dbReference type="GO" id="GO:0009254">
    <property type="term" value="P:peptidoglycan turnover"/>
    <property type="evidence" value="ECO:0007669"/>
    <property type="project" value="UniProtKB-UniRule"/>
</dbReference>
<dbReference type="CDD" id="cd24050">
    <property type="entry name" value="ASKHA_NBD_ANMK"/>
    <property type="match status" value="1"/>
</dbReference>
<dbReference type="Gene3D" id="3.30.420.40">
    <property type="match status" value="2"/>
</dbReference>
<dbReference type="HAMAP" id="MF_01270">
    <property type="entry name" value="AnhMurNAc_kinase"/>
    <property type="match status" value="1"/>
</dbReference>
<dbReference type="InterPro" id="IPR005338">
    <property type="entry name" value="Anhydro_N_Ac-Mur_kinase"/>
</dbReference>
<dbReference type="InterPro" id="IPR043129">
    <property type="entry name" value="ATPase_NBD"/>
</dbReference>
<dbReference type="NCBIfam" id="NF007139">
    <property type="entry name" value="PRK09585.1-3"/>
    <property type="match status" value="1"/>
</dbReference>
<dbReference type="PANTHER" id="PTHR30605">
    <property type="entry name" value="ANHYDRO-N-ACETYLMURAMIC ACID KINASE"/>
    <property type="match status" value="1"/>
</dbReference>
<dbReference type="PANTHER" id="PTHR30605:SF0">
    <property type="entry name" value="ANHYDRO-N-ACETYLMURAMIC ACID KINASE"/>
    <property type="match status" value="1"/>
</dbReference>
<dbReference type="Pfam" id="PF03702">
    <property type="entry name" value="AnmK"/>
    <property type="match status" value="1"/>
</dbReference>
<dbReference type="SUPFAM" id="SSF53067">
    <property type="entry name" value="Actin-like ATPase domain"/>
    <property type="match status" value="1"/>
</dbReference>
<gene>
    <name evidence="1" type="primary">anmK</name>
    <name type="ordered locus">Psyc_1971</name>
</gene>
<organism>
    <name type="scientific">Psychrobacter arcticus (strain DSM 17307 / VKM B-2377 / 273-4)</name>
    <dbReference type="NCBI Taxonomy" id="259536"/>
    <lineage>
        <taxon>Bacteria</taxon>
        <taxon>Pseudomonadati</taxon>
        <taxon>Pseudomonadota</taxon>
        <taxon>Gammaproteobacteria</taxon>
        <taxon>Moraxellales</taxon>
        <taxon>Moraxellaceae</taxon>
        <taxon>Psychrobacter</taxon>
    </lineage>
</organism>
<name>ANMK_PSYA2</name>
<protein>
    <recommendedName>
        <fullName evidence="1">Anhydro-N-acetylmuramic acid kinase</fullName>
        <ecNumber evidence="1">2.7.1.170</ecNumber>
    </recommendedName>
    <alternativeName>
        <fullName evidence="1">AnhMurNAc kinase</fullName>
    </alternativeName>
</protein>
<sequence length="436" mass="47228">MDDLNYATLTEALEQTVFENFDDGLYIGMMSGTSLDGMDAILCQFSNHTNSSNISNEDNTQQPMHLLATYSQDFPPRLREVLLALCQPNGINQLTPTAGEPDSELEWFGWASKAYAEFASDVVNTLLQQSNTDIESVLAIGCHGQTVRHRPQMGFSLQLVDANIIAERTGISVVSDFRRRDMAVGGQGAPLVPAFHQALFAVPDSTRILLNLGGIANIAVLPAISDDLSDFNEHSDNQPSDSVVGYDTGPANLLLDAWTALHTDKDYDAGGTWAQSGQVVEPLLNQLLEHPFFVKAYPKSTGREDFNLAWLQDELQKFDQAAADIRYSSADVQATLTELTAISASAQINIFINASSNNAVYVCGGGALNDYLMMRLQAHLPRCKVETTASLGLEPTWVEAVAFAWLARQTLMGETGNLPAVTGASKGVVLGQVCFA</sequence>